<reference key="1">
    <citation type="journal article" date="2001" name="Proc. Natl. Acad. Sci. U.S.A.">
        <title>The complete genome of the crenarchaeon Sulfolobus solfataricus P2.</title>
        <authorList>
            <person name="She Q."/>
            <person name="Singh R.K."/>
            <person name="Confalonieri F."/>
            <person name="Zivanovic Y."/>
            <person name="Allard G."/>
            <person name="Awayez M.J."/>
            <person name="Chan-Weiher C.C.-Y."/>
            <person name="Clausen I.G."/>
            <person name="Curtis B.A."/>
            <person name="De Moors A."/>
            <person name="Erauso G."/>
            <person name="Fletcher C."/>
            <person name="Gordon P.M.K."/>
            <person name="Heikamp-de Jong I."/>
            <person name="Jeffries A.C."/>
            <person name="Kozera C.J."/>
            <person name="Medina N."/>
            <person name="Peng X."/>
            <person name="Thi-Ngoc H.P."/>
            <person name="Redder P."/>
            <person name="Schenk M.E."/>
            <person name="Theriault C."/>
            <person name="Tolstrup N."/>
            <person name="Charlebois R.L."/>
            <person name="Doolittle W.F."/>
            <person name="Duguet M."/>
            <person name="Gaasterland T."/>
            <person name="Garrett R.A."/>
            <person name="Ragan M.A."/>
            <person name="Sensen C.W."/>
            <person name="Van der Oost J."/>
        </authorList>
    </citation>
    <scope>NUCLEOTIDE SEQUENCE [LARGE SCALE GENOMIC DNA]</scope>
    <source>
        <strain>ATCC 35092 / DSM 1617 / JCM 11322 / P2</strain>
    </source>
</reference>
<sequence length="352" mass="41079">MVHKVSQREFSRCYKRNCDCICRKPKQRRNVYLNYSLELLITIFKEVIPNLPMDKKIAFVKDYGAYLKVEKGLITCKIKNQVKWSIAPTELHSIVVLTNSSISSEVVKVANEYGIEIVFFNKHEPYAKLIPAKYAGSFKVWLKQLTAWKRRKVEFAKAFIYGKVHNQWVTLRYYERKYGYNLTSQELDRLAREITFVNTAEEVMQKEAEAAKVYWRGVKSLLPKSLGFKGRMKRVSDNLDPFNRALNIGYGMLRKVVWGAVISVGLNPYIGFLHKFRSGRISLVFDLMEEFRSPFVDRKLIGLARESADKVTDLKTVYSLFSDVKEDEIYTQARRLVNAILNDEEYRPYLAK</sequence>
<keyword id="KW-0051">Antiviral defense</keyword>
<keyword id="KW-0238">DNA-binding</keyword>
<keyword id="KW-0255">Endonuclease</keyword>
<keyword id="KW-0378">Hydrolase</keyword>
<keyword id="KW-0460">Magnesium</keyword>
<keyword id="KW-0464">Manganese</keyword>
<keyword id="KW-0479">Metal-binding</keyword>
<keyword id="KW-0540">Nuclease</keyword>
<keyword id="KW-1185">Reference proteome</keyword>
<dbReference type="EC" id="3.1.-.-" evidence="1"/>
<dbReference type="EMBL" id="AE006641">
    <property type="protein sequence ID" value="AAK41640.1"/>
    <property type="molecule type" value="Genomic_DNA"/>
</dbReference>
<dbReference type="PIR" id="A99298">
    <property type="entry name" value="A99298"/>
</dbReference>
<dbReference type="SMR" id="Q97YC1"/>
<dbReference type="STRING" id="273057.SSO1405"/>
<dbReference type="PaxDb" id="273057-SSO1405"/>
<dbReference type="EnsemblBacteria" id="AAK41640">
    <property type="protein sequence ID" value="AAK41640"/>
    <property type="gene ID" value="SSO1405"/>
</dbReference>
<dbReference type="KEGG" id="sso:SSO1405"/>
<dbReference type="PATRIC" id="fig|273057.12.peg.1421"/>
<dbReference type="eggNOG" id="arCOG01452">
    <property type="taxonomic scope" value="Archaea"/>
</dbReference>
<dbReference type="HOGENOM" id="CLU_052779_0_0_2"/>
<dbReference type="InParanoid" id="Q97YC1"/>
<dbReference type="PhylomeDB" id="Q97YC1"/>
<dbReference type="Proteomes" id="UP000001974">
    <property type="component" value="Chromosome"/>
</dbReference>
<dbReference type="GO" id="GO:0003677">
    <property type="term" value="F:DNA binding"/>
    <property type="evidence" value="ECO:0007669"/>
    <property type="project" value="UniProtKB-KW"/>
</dbReference>
<dbReference type="GO" id="GO:0004519">
    <property type="term" value="F:endonuclease activity"/>
    <property type="evidence" value="ECO:0000318"/>
    <property type="project" value="GO_Central"/>
</dbReference>
<dbReference type="GO" id="GO:0046872">
    <property type="term" value="F:metal ion binding"/>
    <property type="evidence" value="ECO:0007669"/>
    <property type="project" value="UniProtKB-UniRule"/>
</dbReference>
<dbReference type="GO" id="GO:0099048">
    <property type="term" value="P:CRISPR-cas system"/>
    <property type="evidence" value="ECO:0000318"/>
    <property type="project" value="GO_Central"/>
</dbReference>
<dbReference type="GO" id="GO:0051607">
    <property type="term" value="P:defense response to virus"/>
    <property type="evidence" value="ECO:0007669"/>
    <property type="project" value="UniProtKB-UniRule"/>
</dbReference>
<dbReference type="GO" id="GO:0043571">
    <property type="term" value="P:maintenance of CRISPR repeat elements"/>
    <property type="evidence" value="ECO:0000318"/>
    <property type="project" value="GO_Central"/>
</dbReference>
<dbReference type="CDD" id="cd09636">
    <property type="entry name" value="Cas1_I-II-III"/>
    <property type="match status" value="1"/>
</dbReference>
<dbReference type="Gene3D" id="1.20.120.920">
    <property type="entry name" value="CRISPR-associated endonuclease Cas1, C-terminal domain"/>
    <property type="match status" value="1"/>
</dbReference>
<dbReference type="Gene3D" id="3.100.10.20">
    <property type="entry name" value="CRISPR-associated endonuclease Cas1, N-terminal domain"/>
    <property type="match status" value="1"/>
</dbReference>
<dbReference type="HAMAP" id="MF_01470">
    <property type="entry name" value="Cas1"/>
    <property type="match status" value="1"/>
</dbReference>
<dbReference type="InterPro" id="IPR050646">
    <property type="entry name" value="Cas1"/>
</dbReference>
<dbReference type="InterPro" id="IPR002729">
    <property type="entry name" value="CRISPR-assoc_Cas1"/>
</dbReference>
<dbReference type="InterPro" id="IPR042206">
    <property type="entry name" value="CRISPR-assoc_Cas1_C"/>
</dbReference>
<dbReference type="InterPro" id="IPR042211">
    <property type="entry name" value="CRISPR-assoc_Cas1_N"/>
</dbReference>
<dbReference type="NCBIfam" id="TIGR00287">
    <property type="entry name" value="cas1"/>
    <property type="match status" value="1"/>
</dbReference>
<dbReference type="PANTHER" id="PTHR34353">
    <property type="entry name" value="CRISPR-ASSOCIATED ENDONUCLEASE CAS1 1"/>
    <property type="match status" value="1"/>
</dbReference>
<dbReference type="PANTHER" id="PTHR34353:SF2">
    <property type="entry name" value="CRISPR-ASSOCIATED ENDONUCLEASE CAS1 1"/>
    <property type="match status" value="1"/>
</dbReference>
<dbReference type="Pfam" id="PF01867">
    <property type="entry name" value="Cas_Cas1"/>
    <property type="match status" value="1"/>
</dbReference>
<protein>
    <recommendedName>
        <fullName evidence="1">CRISPR-associated endonuclease Cas1 1</fullName>
        <ecNumber evidence="1">3.1.-.-</ecNumber>
    </recommendedName>
</protein>
<evidence type="ECO:0000255" key="1">
    <source>
        <dbReference type="HAMAP-Rule" id="MF_01470"/>
    </source>
</evidence>
<feature type="chain" id="PRO_0000417112" description="CRISPR-associated endonuclease Cas1 1">
    <location>
        <begin position="1"/>
        <end position="352"/>
    </location>
</feature>
<feature type="binding site" evidence="1">
    <location>
        <position position="207"/>
    </location>
    <ligand>
        <name>Mn(2+)</name>
        <dbReference type="ChEBI" id="CHEBI:29035"/>
    </ligand>
</feature>
<feature type="binding site" evidence="1">
    <location>
        <position position="274"/>
    </location>
    <ligand>
        <name>Mn(2+)</name>
        <dbReference type="ChEBI" id="CHEBI:29035"/>
    </ligand>
</feature>
<feature type="binding site" evidence="1">
    <location>
        <position position="289"/>
    </location>
    <ligand>
        <name>Mn(2+)</name>
        <dbReference type="ChEBI" id="CHEBI:29035"/>
    </ligand>
</feature>
<gene>
    <name evidence="1" type="primary">cas1-1</name>
    <name type="ordered locus">SSO1405</name>
</gene>
<accession>Q97YC1</accession>
<name>CAS1A_SACS2</name>
<organism>
    <name type="scientific">Saccharolobus solfataricus (strain ATCC 35092 / DSM 1617 / JCM 11322 / P2)</name>
    <name type="common">Sulfolobus solfataricus</name>
    <dbReference type="NCBI Taxonomy" id="273057"/>
    <lineage>
        <taxon>Archaea</taxon>
        <taxon>Thermoproteota</taxon>
        <taxon>Thermoprotei</taxon>
        <taxon>Sulfolobales</taxon>
        <taxon>Sulfolobaceae</taxon>
        <taxon>Saccharolobus</taxon>
    </lineage>
</organism>
<proteinExistence type="inferred from homology"/>
<comment type="function">
    <text evidence="1">CRISPR (clustered regularly interspaced short palindromic repeat), is an adaptive immune system that provides protection against mobile genetic elements (viruses, transposable elements and conjugative plasmids). CRISPR clusters contain spacers, sequences complementary to antecedent mobile elements, and target invading nucleic acids. CRISPR clusters are transcribed and processed into CRISPR RNA (crRNA). Acts as a dsDNA endonuclease. Involved in the integration of spacer DNA into the CRISPR cassette.</text>
</comment>
<comment type="cofactor">
    <cofactor evidence="1">
        <name>Mg(2+)</name>
        <dbReference type="ChEBI" id="CHEBI:18420"/>
    </cofactor>
    <cofactor evidence="1">
        <name>Mn(2+)</name>
        <dbReference type="ChEBI" id="CHEBI:29035"/>
    </cofactor>
</comment>
<comment type="subunit">
    <text evidence="1">Homodimer, forms a heterotetramer with a Cas2 homodimer.</text>
</comment>
<comment type="similarity">
    <text evidence="1">Belongs to the CRISPR-associated endonuclease Cas1 family.</text>
</comment>